<comment type="function">
    <text evidence="1">Tetrapolymerization of the monopyrrole PBG into the hydroxymethylbilane pre-uroporphyrinogen in several discrete steps.</text>
</comment>
<comment type="catalytic activity">
    <reaction evidence="1">
        <text>4 porphobilinogen + H2O = hydroxymethylbilane + 4 NH4(+)</text>
        <dbReference type="Rhea" id="RHEA:13185"/>
        <dbReference type="ChEBI" id="CHEBI:15377"/>
        <dbReference type="ChEBI" id="CHEBI:28938"/>
        <dbReference type="ChEBI" id="CHEBI:57845"/>
        <dbReference type="ChEBI" id="CHEBI:58126"/>
        <dbReference type="EC" id="2.5.1.61"/>
    </reaction>
</comment>
<comment type="cofactor">
    <cofactor evidence="1">
        <name>dipyrromethane</name>
        <dbReference type="ChEBI" id="CHEBI:60342"/>
    </cofactor>
    <text evidence="1">Binds 1 dipyrromethane group covalently.</text>
</comment>
<comment type="pathway">
    <text evidence="1">Porphyrin-containing compound metabolism; protoporphyrin-IX biosynthesis; coproporphyrinogen-III from 5-aminolevulinate: step 2/4.</text>
</comment>
<comment type="subunit">
    <text evidence="1">Monomer.</text>
</comment>
<comment type="miscellaneous">
    <text evidence="1">The porphobilinogen subunits are added to the dipyrromethane group.</text>
</comment>
<comment type="similarity">
    <text evidence="1">Belongs to the HMBS family.</text>
</comment>
<protein>
    <recommendedName>
        <fullName evidence="1">Porphobilinogen deaminase</fullName>
        <shortName evidence="1">PBG</shortName>
        <ecNumber evidence="1">2.5.1.61</ecNumber>
    </recommendedName>
    <alternativeName>
        <fullName evidence="1">Hydroxymethylbilane synthase</fullName>
        <shortName evidence="1">HMBS</shortName>
    </alternativeName>
    <alternativeName>
        <fullName evidence="1">Pre-uroporphyrinogen synthase</fullName>
    </alternativeName>
</protein>
<organism>
    <name type="scientific">Francisella tularensis subsp. holarctica (strain OSU18)</name>
    <dbReference type="NCBI Taxonomy" id="393011"/>
    <lineage>
        <taxon>Bacteria</taxon>
        <taxon>Pseudomonadati</taxon>
        <taxon>Pseudomonadota</taxon>
        <taxon>Gammaproteobacteria</taxon>
        <taxon>Thiotrichales</taxon>
        <taxon>Francisellaceae</taxon>
        <taxon>Francisella</taxon>
    </lineage>
</organism>
<proteinExistence type="inferred from homology"/>
<feature type="chain" id="PRO_0000304238" description="Porphobilinogen deaminase">
    <location>
        <begin position="1"/>
        <end position="300"/>
    </location>
</feature>
<feature type="modified residue" description="S-(dipyrrolylmethanemethyl)cysteine" evidence="1">
    <location>
        <position position="239"/>
    </location>
</feature>
<gene>
    <name evidence="1" type="primary">hemC</name>
    <name type="ordered locus">FTH_0132</name>
</gene>
<dbReference type="EC" id="2.5.1.61" evidence="1"/>
<dbReference type="EMBL" id="CP000437">
    <property type="protein sequence ID" value="ABI82169.1"/>
    <property type="molecule type" value="Genomic_DNA"/>
</dbReference>
<dbReference type="RefSeq" id="WP_011648554.1">
    <property type="nucleotide sequence ID" value="NC_017463.1"/>
</dbReference>
<dbReference type="SMR" id="Q0BP15"/>
<dbReference type="KEGG" id="fth:FTH_0132"/>
<dbReference type="UniPathway" id="UPA00251">
    <property type="reaction ID" value="UER00319"/>
</dbReference>
<dbReference type="GO" id="GO:0005737">
    <property type="term" value="C:cytoplasm"/>
    <property type="evidence" value="ECO:0007669"/>
    <property type="project" value="TreeGrafter"/>
</dbReference>
<dbReference type="GO" id="GO:0004418">
    <property type="term" value="F:hydroxymethylbilane synthase activity"/>
    <property type="evidence" value="ECO:0007669"/>
    <property type="project" value="UniProtKB-UniRule"/>
</dbReference>
<dbReference type="GO" id="GO:0006782">
    <property type="term" value="P:protoporphyrinogen IX biosynthetic process"/>
    <property type="evidence" value="ECO:0007669"/>
    <property type="project" value="UniProtKB-UniRule"/>
</dbReference>
<dbReference type="CDD" id="cd13646">
    <property type="entry name" value="PBP2_EcHMBS_like"/>
    <property type="match status" value="1"/>
</dbReference>
<dbReference type="FunFam" id="3.40.190.10:FF:000004">
    <property type="entry name" value="Porphobilinogen deaminase"/>
    <property type="match status" value="1"/>
</dbReference>
<dbReference type="FunFam" id="3.40.190.10:FF:000005">
    <property type="entry name" value="Porphobilinogen deaminase"/>
    <property type="match status" value="1"/>
</dbReference>
<dbReference type="Gene3D" id="3.40.190.10">
    <property type="entry name" value="Periplasmic binding protein-like II"/>
    <property type="match status" value="2"/>
</dbReference>
<dbReference type="Gene3D" id="3.30.160.40">
    <property type="entry name" value="Porphobilinogen deaminase, C-terminal domain"/>
    <property type="match status" value="1"/>
</dbReference>
<dbReference type="HAMAP" id="MF_00260">
    <property type="entry name" value="Porphobil_deam"/>
    <property type="match status" value="1"/>
</dbReference>
<dbReference type="InterPro" id="IPR000860">
    <property type="entry name" value="HemC"/>
</dbReference>
<dbReference type="InterPro" id="IPR022419">
    <property type="entry name" value="Porphobilin_deaminase_cofac_BS"/>
</dbReference>
<dbReference type="InterPro" id="IPR022417">
    <property type="entry name" value="Porphobilin_deaminase_N"/>
</dbReference>
<dbReference type="InterPro" id="IPR022418">
    <property type="entry name" value="Porphobilinogen_deaminase_C"/>
</dbReference>
<dbReference type="InterPro" id="IPR036803">
    <property type="entry name" value="Porphobilinogen_deaminase_C_sf"/>
</dbReference>
<dbReference type="NCBIfam" id="TIGR00212">
    <property type="entry name" value="hemC"/>
    <property type="match status" value="1"/>
</dbReference>
<dbReference type="PANTHER" id="PTHR11557">
    <property type="entry name" value="PORPHOBILINOGEN DEAMINASE"/>
    <property type="match status" value="1"/>
</dbReference>
<dbReference type="PANTHER" id="PTHR11557:SF0">
    <property type="entry name" value="PORPHOBILINOGEN DEAMINASE"/>
    <property type="match status" value="1"/>
</dbReference>
<dbReference type="Pfam" id="PF01379">
    <property type="entry name" value="Porphobil_deam"/>
    <property type="match status" value="1"/>
</dbReference>
<dbReference type="Pfam" id="PF03900">
    <property type="entry name" value="Porphobil_deamC"/>
    <property type="match status" value="1"/>
</dbReference>
<dbReference type="PIRSF" id="PIRSF001438">
    <property type="entry name" value="4pyrrol_synth_OHMeBilane_synth"/>
    <property type="match status" value="1"/>
</dbReference>
<dbReference type="PRINTS" id="PR00151">
    <property type="entry name" value="PORPHBDMNASE"/>
</dbReference>
<dbReference type="SUPFAM" id="SSF53850">
    <property type="entry name" value="Periplasmic binding protein-like II"/>
    <property type="match status" value="1"/>
</dbReference>
<dbReference type="SUPFAM" id="SSF54782">
    <property type="entry name" value="Porphobilinogen deaminase (hydroxymethylbilane synthase), C-terminal domain"/>
    <property type="match status" value="1"/>
</dbReference>
<dbReference type="PROSITE" id="PS00533">
    <property type="entry name" value="PORPHOBILINOGEN_DEAM"/>
    <property type="match status" value="1"/>
</dbReference>
<reference key="1">
    <citation type="journal article" date="2006" name="J. Bacteriol.">
        <title>Chromosome rearrangement and diversification of Francisella tularensis revealed by the type B (OSU18) genome sequence.</title>
        <authorList>
            <person name="Petrosino J.F."/>
            <person name="Xiang Q."/>
            <person name="Karpathy S.E."/>
            <person name="Jiang H."/>
            <person name="Yerrapragada S."/>
            <person name="Liu Y."/>
            <person name="Gioia J."/>
            <person name="Hemphill L."/>
            <person name="Gonzalez A."/>
            <person name="Raghavan T.M."/>
            <person name="Uzman A."/>
            <person name="Fox G.E."/>
            <person name="Highlander S."/>
            <person name="Reichard M."/>
            <person name="Morton R.J."/>
            <person name="Clinkenbeard K.D."/>
            <person name="Weinstock G.M."/>
        </authorList>
    </citation>
    <scope>NUCLEOTIDE SEQUENCE [LARGE SCALE GENOMIC DNA]</scope>
    <source>
        <strain>OSU18</strain>
    </source>
</reference>
<name>HEM3_FRATO</name>
<accession>Q0BP15</accession>
<evidence type="ECO:0000255" key="1">
    <source>
        <dbReference type="HAMAP-Rule" id="MF_00260"/>
    </source>
</evidence>
<sequence length="300" mass="33289">MKQITIASRESKLALWQTNFVKNRIQSELNIPCEISTMKTQGDIILDQPLNKIGGKALFMKELEVAILSNKADIAVHSLKDVPYQLPQGFCLAGFMPREDPRDAFVSNKYNSIDDLPKGAVVGTSSLRRKAQLLHYRDDLEIRDLRGNIQTRLSKLDNGDYDAIILASAGLIRLELVERITQFIPVEISLPAVGQGIVVIEALERDNDLLEKIQKLNCRESSRVATAERAFNQELKGGCHVAIGAYAELDNNQITLMAMVASSDGKKILKRKMIGDDPTKLGKLLAQEMIALGAYKILES</sequence>
<keyword id="KW-0627">Porphyrin biosynthesis</keyword>
<keyword id="KW-0808">Transferase</keyword>